<accession>A0A7J6K629</accession>
<name>TGPC1_TOXGO</name>
<dbReference type="EMBL" id="JAAUHK010000194">
    <property type="protein sequence ID" value="KAF4641941.1"/>
    <property type="molecule type" value="Genomic_DNA"/>
</dbReference>
<dbReference type="SMR" id="A0A7J6K629"/>
<dbReference type="VEuPathDB" id="ToxoDB:TGME49_233540"/>
<dbReference type="Proteomes" id="UP000557509">
    <property type="component" value="Unassembled WGS sequence"/>
</dbReference>
<dbReference type="GO" id="GO:0160211">
    <property type="term" value="C:apicoplast membrane"/>
    <property type="evidence" value="ECO:0000314"/>
    <property type="project" value="UniProtKB"/>
</dbReference>
<dbReference type="GO" id="GO:0022857">
    <property type="term" value="F:transmembrane transporter activity"/>
    <property type="evidence" value="ECO:0007669"/>
    <property type="project" value="InterPro"/>
</dbReference>
<dbReference type="GO" id="GO:0003333">
    <property type="term" value="P:amino acid transmembrane transport"/>
    <property type="evidence" value="ECO:0000314"/>
    <property type="project" value="UniProtKB"/>
</dbReference>
<dbReference type="GO" id="GO:1901475">
    <property type="term" value="P:pyruvate transmembrane transport"/>
    <property type="evidence" value="ECO:0000314"/>
    <property type="project" value="UniProtKB"/>
</dbReference>
<dbReference type="Gene3D" id="1.20.1250.20">
    <property type="entry name" value="MFS general substrate transporter like domains"/>
    <property type="match status" value="2"/>
</dbReference>
<dbReference type="InterPro" id="IPR011701">
    <property type="entry name" value="MFS"/>
</dbReference>
<dbReference type="InterPro" id="IPR052983">
    <property type="entry name" value="MFS_Riboflavin_Transporter"/>
</dbReference>
<dbReference type="InterPro" id="IPR036259">
    <property type="entry name" value="MFS_trans_sf"/>
</dbReference>
<dbReference type="PANTHER" id="PTHR43385">
    <property type="entry name" value="RIBOFLAVIN TRANSPORTER RIBJ"/>
    <property type="match status" value="1"/>
</dbReference>
<dbReference type="PANTHER" id="PTHR43385:SF1">
    <property type="entry name" value="RIBOFLAVIN TRANSPORTER RIBJ"/>
    <property type="match status" value="1"/>
</dbReference>
<dbReference type="Pfam" id="PF07690">
    <property type="entry name" value="MFS_1"/>
    <property type="match status" value="1"/>
</dbReference>
<dbReference type="SUPFAM" id="SSF103473">
    <property type="entry name" value="MFS general substrate transporter"/>
    <property type="match status" value="1"/>
</dbReference>
<dbReference type="PROSITE" id="PS51257">
    <property type="entry name" value="PROKAR_LIPOPROTEIN"/>
    <property type="match status" value="1"/>
</dbReference>
<reference evidence="7" key="1">
    <citation type="submission" date="2020-03" db="EMBL/GenBank/DDBJ databases">
        <title>Genome sequence of Toxoplasma gondii RH-88 strain.</title>
        <authorList>
            <person name="Lorenzi H.A."/>
            <person name="Venepally P."/>
            <person name="Rozenberg A."/>
            <person name="Sibley D."/>
        </authorList>
    </citation>
    <scope>NUCLEOTIDE SEQUENCE [LARGE SCALE GENOMIC DNA]</scope>
    <source>
        <strain evidence="7">RH-88</strain>
    </source>
</reference>
<reference evidence="5" key="2">
    <citation type="journal article" date="2024" name="Proc. Natl. Acad. Sci. U.S.A.">
        <title>A pyruvate transporter in the apicoplast of apicomplexan parasites.</title>
        <authorList>
            <person name="Chen P."/>
            <person name="Chen Y."/>
            <person name="Xia N."/>
            <person name="Fan B."/>
            <person name="Niu Z."/>
            <person name="He Z."/>
            <person name="Wang X."/>
            <person name="Yuan J."/>
            <person name="Gupta N."/>
            <person name="Shen B."/>
        </authorList>
    </citation>
    <scope>FUNCTION</scope>
    <scope>INTERACTION WITH APICOPLAST PYRUVATE CARRIER 2</scope>
    <scope>SUBCELLULAR LOCATION</scope>
    <scope>TOPOLOGY</scope>
</reference>
<feature type="chain" id="PRO_0000461486" description="Apicoplast pyruvate carrier 1" evidence="1">
    <location>
        <begin position="1"/>
        <end position="547"/>
    </location>
</feature>
<feature type="topological domain" description="Cytoplasmic" evidence="3">
    <location>
        <begin position="1"/>
        <end position="45"/>
    </location>
</feature>
<feature type="transmembrane region" description="Helical" evidence="1">
    <location>
        <begin position="46"/>
        <end position="66"/>
    </location>
</feature>
<feature type="transmembrane region" description="Helical" evidence="1">
    <location>
        <begin position="126"/>
        <end position="146"/>
    </location>
</feature>
<feature type="transmembrane region" description="Helical" evidence="1">
    <location>
        <begin position="167"/>
        <end position="187"/>
    </location>
</feature>
<feature type="transmembrane region" description="Helical" evidence="1">
    <location>
        <begin position="189"/>
        <end position="209"/>
    </location>
</feature>
<feature type="transmembrane region" description="Helical" evidence="1">
    <location>
        <begin position="212"/>
        <end position="232"/>
    </location>
</feature>
<feature type="transmembrane region" description="Helical" evidence="1">
    <location>
        <begin position="278"/>
        <end position="298"/>
    </location>
</feature>
<feature type="transmembrane region" description="Helical" evidence="1">
    <location>
        <begin position="345"/>
        <end position="365"/>
    </location>
</feature>
<feature type="transmembrane region" description="Helical" evidence="1">
    <location>
        <begin position="385"/>
        <end position="405"/>
    </location>
</feature>
<feature type="transmembrane region" description="Helical" evidence="1">
    <location>
        <begin position="417"/>
        <end position="437"/>
    </location>
</feature>
<feature type="transmembrane region" description="Helical" evidence="1">
    <location>
        <begin position="445"/>
        <end position="465"/>
    </location>
</feature>
<feature type="transmembrane region" description="Helical" evidence="1">
    <location>
        <begin position="467"/>
        <end position="487"/>
    </location>
</feature>
<feature type="transmembrane region" description="Helical" evidence="1">
    <location>
        <begin position="515"/>
        <end position="535"/>
    </location>
</feature>
<feature type="region of interest" description="Disordered" evidence="2">
    <location>
        <begin position="1"/>
        <end position="33"/>
    </location>
</feature>
<feature type="compositionally biased region" description="Polar residues" evidence="2">
    <location>
        <begin position="21"/>
        <end position="33"/>
    </location>
</feature>
<protein>
    <recommendedName>
        <fullName evidence="4">Apicoplast pyruvate carrier 1</fullName>
        <shortName evidence="4">APC1</shortName>
    </recommendedName>
</protein>
<organism evidence="7">
    <name type="scientific">Toxoplasma gondii</name>
    <dbReference type="NCBI Taxonomy" id="5811"/>
    <lineage>
        <taxon>Eukaryota</taxon>
        <taxon>Sar</taxon>
        <taxon>Alveolata</taxon>
        <taxon>Apicomplexa</taxon>
        <taxon>Conoidasida</taxon>
        <taxon>Coccidia</taxon>
        <taxon>Eucoccidiorida</taxon>
        <taxon>Eimeriorina</taxon>
        <taxon>Sarcocystidae</taxon>
        <taxon>Toxoplasma</taxon>
    </lineage>
</organism>
<evidence type="ECO:0000255" key="1"/>
<evidence type="ECO:0000256" key="2">
    <source>
        <dbReference type="SAM" id="MobiDB-lite"/>
    </source>
</evidence>
<evidence type="ECO:0000269" key="3">
    <source>
    </source>
</evidence>
<evidence type="ECO:0000303" key="4">
    <source>
    </source>
</evidence>
<evidence type="ECO:0000305" key="5"/>
<evidence type="ECO:0000312" key="6">
    <source>
        <dbReference type="EMBL" id="KAF4641941.1"/>
    </source>
</evidence>
<evidence type="ECO:0000312" key="7">
    <source>
        <dbReference type="Proteomes" id="UP000557509"/>
    </source>
</evidence>
<sequence length="547" mass="57912">MEPRAPPRLSVSSPRRESGATVPSHSPSTLLSCASSETATEKRRRWTGVLSVFGGVLVHVCLGTVYTWGTLAVYVVSYMRLLQIQSLQAASDASTLLERTSEEDGSSLSVFAFASAPSLVRLSDSAWVLASQFAGMTLGMPLGGIAQKTLGPCRTVILGGALMSLAVGMAPVLLHSYALFVTVFGVIQGVGLGLAYTAPLLCGLAWFPEKKGIVSGAITAGFGTGALLFSPLQAAFLNPLSIAPSQAPYASHPAELYYDVSDSDQLEILLRVPRLFRLLAVCYLLLVSAGAALLRVPAASPGVRTPGASACVFDEEAALVKSLEREEVRDETREEARATVSVRTALVSWTFWSLWTLFFLNGLAICFTASFWRLLAVDRNTRAYILTETQLALVGAAASACNAVGRLAWGHLADKRGFQTSLMGLSALWSLLLFFLPNAAPKGGLCYALAVSGSFFCLGGNFSVFPSAVASVFGPDAIGHLYGFIFGSQLASSLGFAYLTQRVAQTIGTDGLSTLMGLCTALTAMSVFCLPALSPTPRKRHSFQKQS</sequence>
<gene>
    <name evidence="6" type="ORF">TGRH88_077530</name>
</gene>
<keyword id="KW-0933">Apicoplast</keyword>
<keyword id="KW-0472">Membrane</keyword>
<keyword id="KW-0934">Plastid</keyword>
<keyword id="KW-0670">Pyruvate</keyword>
<keyword id="KW-1185">Reference proteome</keyword>
<keyword id="KW-0812">Transmembrane</keyword>
<keyword id="KW-1133">Transmembrane helix</keyword>
<keyword id="KW-0813">Transport</keyword>
<proteinExistence type="evidence at protein level"/>
<comment type="function">
    <text evidence="3">Along with apicoplast pyruvate carrier 2, forms apicoplast pyruvate carrier (APC) complex, which transports pyruvate into the apicoplast and may also transport amino acids like methionine, serine, glycine and tryptophan with low efficiency (PubMed:38865262). Required for maintaining pyruvate-dependent metabolic activities in the apicoplast, such as synthesis of fatty acids, isopentenyl pyrophosphate (IPP), dimethylallyl pyrophosphate (DMAPP) and methylerythritol 4-phosphate (MEP) (PubMed:38865262). Required for maintaining the integrity of the apicoplast (PubMed:38865262). Required for normal parasite growth (PubMed:38865262).</text>
</comment>
<comment type="subunit">
    <text evidence="3">Interacts with apicoplast pyruvate carrier 2.</text>
</comment>
<comment type="subcellular location">
    <subcellularLocation>
        <location evidence="3">Plastid</location>
        <location evidence="3">Apicoplast</location>
    </subcellularLocation>
    <subcellularLocation>
        <location evidence="3">Membrane</location>
        <topology evidence="1">Multi-pass membrane protein</topology>
    </subcellularLocation>
</comment>
<comment type="similarity">
    <text evidence="5">Belongs to the major facilitator superfamily.</text>
</comment>
<comment type="caution">
    <text evidence="3">When expressed individually, apicoplast pyruvate carrier 1 and 2 each demonstrate negligible pyruvate uptake; both proteins are necessary for pyruvate transport.</text>
</comment>